<dbReference type="EC" id="3.1.1.4"/>
<dbReference type="GO" id="GO:0005576">
    <property type="term" value="C:extracellular region"/>
    <property type="evidence" value="ECO:0007669"/>
    <property type="project" value="UniProtKB-SubCell"/>
</dbReference>
<dbReference type="GO" id="GO:0004623">
    <property type="term" value="F:phospholipase A2 activity"/>
    <property type="evidence" value="ECO:0007669"/>
    <property type="project" value="UniProtKB-EC"/>
</dbReference>
<dbReference type="GO" id="GO:0090729">
    <property type="term" value="F:toxin activity"/>
    <property type="evidence" value="ECO:0007669"/>
    <property type="project" value="UniProtKB-KW"/>
</dbReference>
<evidence type="ECO:0000250" key="1"/>
<evidence type="ECO:0000269" key="2">
    <source>
    </source>
</evidence>
<evidence type="ECO:0000305" key="3"/>
<comment type="function">
    <text>Heterodimer: presynaptic neurotoxin.</text>
</comment>
<comment type="function">
    <text>Monomer: Snake venom phospholipase A2 (PLA2) is inactive towards micellar phosphatidylcholine but is weakly active towards non-micellar dithiolecithin. PLA2 catalyzes the calcium-dependent hydrolysis of the 2-acyl groups in 3-sn-phosphoglycerides.</text>
</comment>
<comment type="catalytic activity">
    <reaction>
        <text>a 1,2-diacyl-sn-glycero-3-phosphocholine + H2O = a 1-acyl-sn-glycero-3-phosphocholine + a fatty acid + H(+)</text>
        <dbReference type="Rhea" id="RHEA:15801"/>
        <dbReference type="ChEBI" id="CHEBI:15377"/>
        <dbReference type="ChEBI" id="CHEBI:15378"/>
        <dbReference type="ChEBI" id="CHEBI:28868"/>
        <dbReference type="ChEBI" id="CHEBI:57643"/>
        <dbReference type="ChEBI" id="CHEBI:58168"/>
        <dbReference type="EC" id="3.1.1.4"/>
    </reaction>
</comment>
<comment type="cofactor">
    <cofactor evidence="1">
        <name>Ca(2+)</name>
        <dbReference type="ChEBI" id="CHEBI:29108"/>
    </cofactor>
    <text evidence="1">Binds 1 Ca(2+) ion.</text>
</comment>
<comment type="subunit">
    <text evidence="2">Heterodimer of an acidic subunit (CbIalpha or CbIbeta) and a basic subunit (CbII). The acidic subunit (CbI) is non-toxic, and increases the toxicity of the basic subunit (CbII).</text>
</comment>
<comment type="subcellular location">
    <subcellularLocation>
        <location>Secreted</location>
    </subcellularLocation>
</comment>
<comment type="tissue specificity">
    <text>Expressed by the venom gland.</text>
</comment>
<comment type="PTM">
    <text evidence="1">Contains 7 disulfide bonds.</text>
</comment>
<comment type="similarity">
    <text evidence="3">Belongs to the phospholipase A2 family. Group II subfamily. D49 sub-subfamily.</text>
</comment>
<accession>P0DKR4</accession>
<sequence>DCCYGRVNGCNPKMADKNYE</sequence>
<name>PA2AB_PSEFE</name>
<protein>
    <recommendedName>
        <fullName>Acidic phospholipase A2 CbIbeta</fullName>
        <shortName>svPLA2</shortName>
        <ecNumber>3.1.1.4</ecNumber>
    </recommendedName>
    <alternativeName>
        <fullName>Phosphatidylcholine 2-acylhydrolase</fullName>
    </alternativeName>
</protein>
<keyword id="KW-0903">Direct protein sequencing</keyword>
<keyword id="KW-1015">Disulfide bond</keyword>
<keyword id="KW-0378">Hydrolase</keyword>
<keyword id="KW-0528">Neurotoxin</keyword>
<keyword id="KW-0638">Presynaptic neurotoxin</keyword>
<keyword id="KW-0964">Secreted</keyword>
<keyword id="KW-0800">Toxin</keyword>
<organism>
    <name type="scientific">Pseudocerastes fieldi</name>
    <name type="common">Field's horned viper</name>
    <name type="synonym">Pseudocerastes persicus fieldi</name>
    <dbReference type="NCBI Taxonomy" id="1355908"/>
    <lineage>
        <taxon>Eukaryota</taxon>
        <taxon>Metazoa</taxon>
        <taxon>Chordata</taxon>
        <taxon>Craniata</taxon>
        <taxon>Vertebrata</taxon>
        <taxon>Euteleostomi</taxon>
        <taxon>Lepidosauria</taxon>
        <taxon>Squamata</taxon>
        <taxon>Bifurcata</taxon>
        <taxon>Unidentata</taxon>
        <taxon>Episquamata</taxon>
        <taxon>Toxicofera</taxon>
        <taxon>Serpentes</taxon>
        <taxon>Colubroidea</taxon>
        <taxon>Viperidae</taxon>
        <taxon>Viperinae</taxon>
        <taxon>Pseudocerastes</taxon>
    </lineage>
</organism>
<feature type="chain" id="PRO_0000420358" description="Acidic phospholipase A2 CbIbeta">
    <location>
        <begin position="1" status="less than"/>
        <end position="20" status="greater than"/>
    </location>
</feature>
<feature type="non-consecutive residues" evidence="3">
    <location>
        <begin position="15"/>
        <end position="16"/>
    </location>
</feature>
<feature type="non-terminal residue">
    <location>
        <position position="1"/>
    </location>
</feature>
<feature type="non-terminal residue">
    <location>
        <position position="20"/>
    </location>
</feature>
<proteinExistence type="evidence at protein level"/>
<reference key="1">
    <citation type="journal article" date="1995" name="Toxicon">
        <title>Amino acid sequences of a heterodimeric neurotoxin from the venom of the false horned viper (Pseudocerastes fieldi).</title>
        <authorList>
            <person name="Francis B."/>
            <person name="Bdolah A."/>
            <person name="Kaiser I.I."/>
        </authorList>
    </citation>
    <scope>PROTEIN SEQUENCE</scope>
    <scope>FUNCTION</scope>
    <source>
        <tissue>Venom</tissue>
    </source>
</reference>
<reference key="2">
    <citation type="journal article" date="1985" name="Biochem. Int.">
        <title>The neurotoxic complex from the venom of Pseudocerastes fieldi. Contribution of the nontoxic subunit.</title>
        <authorList>
            <person name="Bdolah A."/>
            <person name="Kinamon S."/>
            <person name="Batzri-Izraeli R."/>
        </authorList>
    </citation>
    <scope>SUBUNIT</scope>
</reference>
<reference key="3">
    <citation type="journal article" date="2007" name="BMC Struct. Biol.">
        <title>Characterization of a human coagulation factor Xa-binding site on Viperidae snake venom phospholipases A2 by affinity binding studies and molecular bioinformatics.</title>
        <authorList>
            <person name="Faure G."/>
            <person name="Gowda V.T."/>
            <person name="Maroun R.C."/>
        </authorList>
    </citation>
    <scope>FUNCTION AS AN ANTICOAGULANT</scope>
</reference>